<name>RGI1_CANTT</name>
<keyword id="KW-1003">Cell membrane</keyword>
<keyword id="KW-0472">Membrane</keyword>
<keyword id="KW-1185">Reference proteome</keyword>
<reference key="1">
    <citation type="journal article" date="2009" name="Nature">
        <title>Evolution of pathogenicity and sexual reproduction in eight Candida genomes.</title>
        <authorList>
            <person name="Butler G."/>
            <person name="Rasmussen M.D."/>
            <person name="Lin M.F."/>
            <person name="Santos M.A.S."/>
            <person name="Sakthikumar S."/>
            <person name="Munro C.A."/>
            <person name="Rheinbay E."/>
            <person name="Grabherr M."/>
            <person name="Forche A."/>
            <person name="Reedy J.L."/>
            <person name="Agrafioti I."/>
            <person name="Arnaud M.B."/>
            <person name="Bates S."/>
            <person name="Brown A.J.P."/>
            <person name="Brunke S."/>
            <person name="Costanzo M.C."/>
            <person name="Fitzpatrick D.A."/>
            <person name="de Groot P.W.J."/>
            <person name="Harris D."/>
            <person name="Hoyer L.L."/>
            <person name="Hube B."/>
            <person name="Klis F.M."/>
            <person name="Kodira C."/>
            <person name="Lennard N."/>
            <person name="Logue M.E."/>
            <person name="Martin R."/>
            <person name="Neiman A.M."/>
            <person name="Nikolaou E."/>
            <person name="Quail M.A."/>
            <person name="Quinn J."/>
            <person name="Santos M.C."/>
            <person name="Schmitzberger F.F."/>
            <person name="Sherlock G."/>
            <person name="Shah P."/>
            <person name="Silverstein K.A.T."/>
            <person name="Skrzypek M.S."/>
            <person name="Soll D."/>
            <person name="Staggs R."/>
            <person name="Stansfield I."/>
            <person name="Stumpf M.P.H."/>
            <person name="Sudbery P.E."/>
            <person name="Srikantha T."/>
            <person name="Zeng Q."/>
            <person name="Berman J."/>
            <person name="Berriman M."/>
            <person name="Heitman J."/>
            <person name="Gow N.A.R."/>
            <person name="Lorenz M.C."/>
            <person name="Birren B.W."/>
            <person name="Kellis M."/>
            <person name="Cuomo C.A."/>
        </authorList>
    </citation>
    <scope>NUCLEOTIDE SEQUENCE [LARGE SCALE GENOMIC DNA]</scope>
    <source>
        <strain>ATCC MYA-3404 / T1</strain>
    </source>
</reference>
<feature type="chain" id="PRO_0000402283" description="Respiratory growth induced protein 1">
    <location>
        <begin position="1"/>
        <end position="201"/>
    </location>
</feature>
<feature type="region of interest" description="Disordered" evidence="2">
    <location>
        <begin position="1"/>
        <end position="48"/>
    </location>
</feature>
<feature type="compositionally biased region" description="Polar residues" evidence="2">
    <location>
        <begin position="31"/>
        <end position="40"/>
    </location>
</feature>
<organism>
    <name type="scientific">Candida tropicalis (strain ATCC MYA-3404 / T1)</name>
    <name type="common">Yeast</name>
    <dbReference type="NCBI Taxonomy" id="294747"/>
    <lineage>
        <taxon>Eukaryota</taxon>
        <taxon>Fungi</taxon>
        <taxon>Dikarya</taxon>
        <taxon>Ascomycota</taxon>
        <taxon>Saccharomycotina</taxon>
        <taxon>Pichiomycetes</taxon>
        <taxon>Debaryomycetaceae</taxon>
        <taxon>Candida/Lodderomyces clade</taxon>
        <taxon>Candida</taxon>
    </lineage>
</organism>
<gene>
    <name type="primary">RGI1</name>
    <name type="ORF">CTRG_01821</name>
</gene>
<comment type="function">
    <text evidence="1">Involved in the control of energetic metabolism and significantly contribute to cell fitness, especially under respiratory growth conditions.</text>
</comment>
<comment type="subcellular location">
    <subcellularLocation>
        <location evidence="1">Cell membrane</location>
        <topology evidence="1">Peripheral membrane protein</topology>
    </subcellularLocation>
</comment>
<comment type="similarity">
    <text evidence="3">Belongs to the RGI1 family.</text>
</comment>
<dbReference type="EMBL" id="GG692396">
    <property type="protein sequence ID" value="EER34959.1"/>
    <property type="molecule type" value="Genomic_DNA"/>
</dbReference>
<dbReference type="RefSeq" id="XP_002547514.1">
    <property type="nucleotide sequence ID" value="XM_002547468.1"/>
</dbReference>
<dbReference type="SMR" id="C5M7I9"/>
<dbReference type="STRING" id="294747.C5M7I9"/>
<dbReference type="EnsemblFungi" id="CTRG_01821-t43_1">
    <property type="protein sequence ID" value="CTRG_01821-t43_1-p1"/>
    <property type="gene ID" value="CTRG_01821"/>
</dbReference>
<dbReference type="GeneID" id="8300084"/>
<dbReference type="KEGG" id="ctp:CTRG_01821"/>
<dbReference type="VEuPathDB" id="FungiDB:CTRG_01821"/>
<dbReference type="eggNOG" id="ENOG502S6JA">
    <property type="taxonomic scope" value="Eukaryota"/>
</dbReference>
<dbReference type="HOGENOM" id="CLU_118207_0_0_1"/>
<dbReference type="OrthoDB" id="4082176at2759"/>
<dbReference type="Proteomes" id="UP000002037">
    <property type="component" value="Unassembled WGS sequence"/>
</dbReference>
<dbReference type="GO" id="GO:0005886">
    <property type="term" value="C:plasma membrane"/>
    <property type="evidence" value="ECO:0007669"/>
    <property type="project" value="UniProtKB-SubCell"/>
</dbReference>
<dbReference type="GO" id="GO:0006112">
    <property type="term" value="P:energy reserve metabolic process"/>
    <property type="evidence" value="ECO:0007669"/>
    <property type="project" value="InterPro"/>
</dbReference>
<dbReference type="Gene3D" id="3.40.1000.40">
    <property type="entry name" value="Respiratory growth induced protein 1"/>
    <property type="match status" value="1"/>
</dbReference>
<dbReference type="InterPro" id="IPR022554">
    <property type="entry name" value="RGI1"/>
</dbReference>
<dbReference type="InterPro" id="IPR038235">
    <property type="entry name" value="RGI1_sf"/>
</dbReference>
<dbReference type="Pfam" id="PF10843">
    <property type="entry name" value="RGI1"/>
    <property type="match status" value="1"/>
</dbReference>
<sequence>MAGKKKSKSDSVPLDLGNIKPLEKLQPVPKTRSSSITSIESADEPGTMKQVLLPPTIREFDELEQFEAFVRDETWDNEFDYFHGRLHYYPPFVMKACHDDVEKIKPTVNKNSKKFRRDLQHHIQKHLIKDLEKCCGYELNFGKGEVVETDSKVTWKFKDETDHGFSKEEEDMYDRHWRLELDVTCTNESAMVDVEYKSIPL</sequence>
<proteinExistence type="inferred from homology"/>
<accession>C5M7I9</accession>
<evidence type="ECO:0000250" key="1"/>
<evidence type="ECO:0000256" key="2">
    <source>
        <dbReference type="SAM" id="MobiDB-lite"/>
    </source>
</evidence>
<evidence type="ECO:0000305" key="3"/>
<protein>
    <recommendedName>
        <fullName>Respiratory growth induced protein 1</fullName>
    </recommendedName>
</protein>